<reference key="1">
    <citation type="journal article" date="2001" name="J. Bacteriol.">
        <title>Genome of the bacterium Streptococcus pneumoniae strain R6.</title>
        <authorList>
            <person name="Hoskins J."/>
            <person name="Alborn W.E. Jr."/>
            <person name="Arnold J."/>
            <person name="Blaszczak L.C."/>
            <person name="Burgett S."/>
            <person name="DeHoff B.S."/>
            <person name="Estrem S.T."/>
            <person name="Fritz L."/>
            <person name="Fu D.-J."/>
            <person name="Fuller W."/>
            <person name="Geringer C."/>
            <person name="Gilmour R."/>
            <person name="Glass J.S."/>
            <person name="Khoja H."/>
            <person name="Kraft A.R."/>
            <person name="Lagace R.E."/>
            <person name="LeBlanc D.J."/>
            <person name="Lee L.N."/>
            <person name="Lefkowitz E.J."/>
            <person name="Lu J."/>
            <person name="Matsushima P."/>
            <person name="McAhren S.M."/>
            <person name="McHenney M."/>
            <person name="McLeaster K."/>
            <person name="Mundy C.W."/>
            <person name="Nicas T.I."/>
            <person name="Norris F.H."/>
            <person name="O'Gara M."/>
            <person name="Peery R.B."/>
            <person name="Robertson G.T."/>
            <person name="Rockey P."/>
            <person name="Sun P.-M."/>
            <person name="Winkler M.E."/>
            <person name="Yang Y."/>
            <person name="Young-Bellido M."/>
            <person name="Zhao G."/>
            <person name="Zook C.A."/>
            <person name="Baltz R.H."/>
            <person name="Jaskunas S.R."/>
            <person name="Rosteck P.R. Jr."/>
            <person name="Skatrud P.L."/>
            <person name="Glass J.I."/>
        </authorList>
    </citation>
    <scope>NUCLEOTIDE SEQUENCE [LARGE SCALE GENOMIC DNA]</scope>
    <source>
        <strain>ATCC BAA-255 / R6</strain>
    </source>
</reference>
<name>AMIC_STRR6</name>
<gene>
    <name type="primary">amiC</name>
    <name type="ordered locus">spr1706</name>
</gene>
<dbReference type="EMBL" id="AE007317">
    <property type="protein sequence ID" value="AAL00509.1"/>
    <property type="molecule type" value="Genomic_DNA"/>
</dbReference>
<dbReference type="PIR" id="H98084">
    <property type="entry name" value="H98084"/>
</dbReference>
<dbReference type="RefSeq" id="NP_359298.1">
    <property type="nucleotide sequence ID" value="NC_003098.1"/>
</dbReference>
<dbReference type="RefSeq" id="WP_000759901.1">
    <property type="nucleotide sequence ID" value="NC_003098.1"/>
</dbReference>
<dbReference type="SMR" id="P0A4M8"/>
<dbReference type="STRING" id="171101.spr1706"/>
<dbReference type="KEGG" id="spr:spr1706"/>
<dbReference type="PATRIC" id="fig|171101.6.peg.1845"/>
<dbReference type="eggNOG" id="COG0601">
    <property type="taxonomic scope" value="Bacteria"/>
</dbReference>
<dbReference type="HOGENOM" id="CLU_041794_0_0_9"/>
<dbReference type="Proteomes" id="UP000000586">
    <property type="component" value="Chromosome"/>
</dbReference>
<dbReference type="GO" id="GO:0005886">
    <property type="term" value="C:plasma membrane"/>
    <property type="evidence" value="ECO:0000318"/>
    <property type="project" value="GO_Central"/>
</dbReference>
<dbReference type="GO" id="GO:0022857">
    <property type="term" value="F:transmembrane transporter activity"/>
    <property type="evidence" value="ECO:0000318"/>
    <property type="project" value="GO_Central"/>
</dbReference>
<dbReference type="GO" id="GO:0015833">
    <property type="term" value="P:peptide transport"/>
    <property type="evidence" value="ECO:0007669"/>
    <property type="project" value="UniProtKB-KW"/>
</dbReference>
<dbReference type="GO" id="GO:0015031">
    <property type="term" value="P:protein transport"/>
    <property type="evidence" value="ECO:0007669"/>
    <property type="project" value="UniProtKB-KW"/>
</dbReference>
<dbReference type="CDD" id="cd06261">
    <property type="entry name" value="TM_PBP2"/>
    <property type="match status" value="1"/>
</dbReference>
<dbReference type="Gene3D" id="1.10.3720.10">
    <property type="entry name" value="MetI-like"/>
    <property type="match status" value="1"/>
</dbReference>
<dbReference type="InterPro" id="IPR000515">
    <property type="entry name" value="MetI-like"/>
</dbReference>
<dbReference type="InterPro" id="IPR035906">
    <property type="entry name" value="MetI-like_sf"/>
</dbReference>
<dbReference type="PANTHER" id="PTHR30465">
    <property type="entry name" value="INNER MEMBRANE ABC TRANSPORTER"/>
    <property type="match status" value="1"/>
</dbReference>
<dbReference type="PANTHER" id="PTHR30465:SF0">
    <property type="entry name" value="OLIGOPEPTIDE TRANSPORT SYSTEM PERMEASE PROTEIN APPB"/>
    <property type="match status" value="1"/>
</dbReference>
<dbReference type="Pfam" id="PF00528">
    <property type="entry name" value="BPD_transp_1"/>
    <property type="match status" value="1"/>
</dbReference>
<dbReference type="SUPFAM" id="SSF161098">
    <property type="entry name" value="MetI-like"/>
    <property type="match status" value="1"/>
</dbReference>
<dbReference type="PROSITE" id="PS50928">
    <property type="entry name" value="ABC_TM1"/>
    <property type="match status" value="1"/>
</dbReference>
<organism>
    <name type="scientific">Streptococcus pneumoniae (strain ATCC BAA-255 / R6)</name>
    <dbReference type="NCBI Taxonomy" id="171101"/>
    <lineage>
        <taxon>Bacteria</taxon>
        <taxon>Bacillati</taxon>
        <taxon>Bacillota</taxon>
        <taxon>Bacilli</taxon>
        <taxon>Lactobacillales</taxon>
        <taxon>Streptococcaceae</taxon>
        <taxon>Streptococcus</taxon>
    </lineage>
</organism>
<feature type="chain" id="PRO_0000059944" description="Oligopeptide transport system permease protein AmiC">
    <location>
        <begin position="1"/>
        <end position="498"/>
    </location>
</feature>
<feature type="transmembrane region" description="Helical" evidence="2">
    <location>
        <begin position="12"/>
        <end position="32"/>
    </location>
</feature>
<feature type="transmembrane region" description="Helical" evidence="2">
    <location>
        <begin position="279"/>
        <end position="299"/>
    </location>
</feature>
<feature type="transmembrane region" description="Helical" evidence="2">
    <location>
        <begin position="316"/>
        <end position="336"/>
    </location>
</feature>
<feature type="transmembrane region" description="Helical" evidence="2">
    <location>
        <begin position="359"/>
        <end position="379"/>
    </location>
</feature>
<feature type="transmembrane region" description="Helical" evidence="2">
    <location>
        <begin position="415"/>
        <end position="435"/>
    </location>
</feature>
<feature type="transmembrane region" description="Helical" evidence="2">
    <location>
        <begin position="461"/>
        <end position="481"/>
    </location>
</feature>
<feature type="domain" description="ABC transmembrane type-1" evidence="2">
    <location>
        <begin position="280"/>
        <end position="479"/>
    </location>
</feature>
<keyword id="KW-1003">Cell membrane</keyword>
<keyword id="KW-0472">Membrane</keyword>
<keyword id="KW-0571">Peptide transport</keyword>
<keyword id="KW-0653">Protein transport</keyword>
<keyword id="KW-1185">Reference proteome</keyword>
<keyword id="KW-0812">Transmembrane</keyword>
<keyword id="KW-1133">Transmembrane helix</keyword>
<keyword id="KW-0813">Transport</keyword>
<proteinExistence type="inferred from homology"/>
<accession>P0A4M8</accession>
<accession>P18793</accession>
<protein>
    <recommendedName>
        <fullName>Oligopeptide transport system permease protein AmiC</fullName>
    </recommendedName>
</protein>
<evidence type="ECO:0000250" key="1"/>
<evidence type="ECO:0000255" key="2">
    <source>
        <dbReference type="PROSITE-ProRule" id="PRU00441"/>
    </source>
</evidence>
<evidence type="ECO:0000305" key="3"/>
<sequence length="498" mass="55623">MKKYIFMRVLRSLVSIFLVTTLTYTIIYTLVPRKLIFKQDPNYNKIATTADKRDNYENTVFERMGYIEYYDTKELQEKASSMDSSVTVEANATNKAIYEKYINQLGHGWTLGEFTESGQFYATREIPIFERVFHFYANLIDIDHTNKIQDPENPDLKRYLRFENDPAIGWSLVGSGTKHKYLLYFNSQFPFVHQNFVNLNLGDSYPTYANTPVLQVITQGQGQTKTAQVQFPTGKKTSSVNIYSRTYKSPSQADSREVASYGKDDPYTATESNYQYPSMIVSSAITGLIGLVLAYALAVPLGSAMARFKNTWIDSLSTGALTFLLALPTIALVYIVRLIGSSIALPDSFPILGAGDWRSYVLPAVILGLLGAPGTAIWIRRYMIDLQSQDFVRFARAKGLSEKEISNKHIFKNAMVPLVSGIPAAIIGVIGGATLTETVFAFPGMGKMLIDSVKASNNSMVVGLVFIFTCISIFSRLLGDIWMTIIDPRIKLTEKGGK</sequence>
<comment type="function">
    <text evidence="1">Part of the binding-protein-dependent transport system for oligopeptides; probably responsible for the translocation of the substrate across the membrane.</text>
</comment>
<comment type="subcellular location">
    <subcellularLocation>
        <location evidence="3">Cell membrane</location>
        <topology evidence="2">Multi-pass membrane protein</topology>
    </subcellularLocation>
</comment>
<comment type="similarity">
    <text evidence="3">Belongs to the binding-protein-dependent transport system permease family. OppBC subfamily.</text>
</comment>